<feature type="chain" id="PRO_1000149633" description="UPF0231 protein Sbal223_3655">
    <location>
        <begin position="1"/>
        <end position="124"/>
    </location>
</feature>
<evidence type="ECO:0000255" key="1">
    <source>
        <dbReference type="HAMAP-Rule" id="MF_01053"/>
    </source>
</evidence>
<protein>
    <recommendedName>
        <fullName evidence="1">UPF0231 protein Sbal223_3655</fullName>
    </recommendedName>
</protein>
<comment type="similarity">
    <text evidence="1">Belongs to the UPF0231 family.</text>
</comment>
<dbReference type="EMBL" id="CP001252">
    <property type="protein sequence ID" value="ACK48133.1"/>
    <property type="molecule type" value="Genomic_DNA"/>
</dbReference>
<dbReference type="RefSeq" id="WP_006080134.1">
    <property type="nucleotide sequence ID" value="NC_011663.1"/>
</dbReference>
<dbReference type="KEGG" id="sbp:Sbal223_3655"/>
<dbReference type="HOGENOM" id="CLU_139226_0_0_6"/>
<dbReference type="Proteomes" id="UP000002507">
    <property type="component" value="Chromosome"/>
</dbReference>
<dbReference type="HAMAP" id="MF_01053">
    <property type="entry name" value="UPF0231"/>
    <property type="match status" value="1"/>
</dbReference>
<dbReference type="InterPro" id="IPR008249">
    <property type="entry name" value="UPF0231"/>
</dbReference>
<dbReference type="NCBIfam" id="NF003581">
    <property type="entry name" value="PRK05248.3-2"/>
    <property type="match status" value="1"/>
</dbReference>
<dbReference type="Pfam" id="PF06062">
    <property type="entry name" value="UPF0231"/>
    <property type="match status" value="1"/>
</dbReference>
<dbReference type="PIRSF" id="PIRSF006287">
    <property type="entry name" value="UCP006287"/>
    <property type="match status" value="1"/>
</dbReference>
<name>Y3655_SHEB2</name>
<reference key="1">
    <citation type="submission" date="2008-12" db="EMBL/GenBank/DDBJ databases">
        <title>Complete sequence of chromosome of Shewanella baltica OS223.</title>
        <authorList>
            <consortium name="US DOE Joint Genome Institute"/>
            <person name="Lucas S."/>
            <person name="Copeland A."/>
            <person name="Lapidus A."/>
            <person name="Glavina del Rio T."/>
            <person name="Dalin E."/>
            <person name="Tice H."/>
            <person name="Bruce D."/>
            <person name="Goodwin L."/>
            <person name="Pitluck S."/>
            <person name="Chertkov O."/>
            <person name="Meincke L."/>
            <person name="Brettin T."/>
            <person name="Detter J.C."/>
            <person name="Han C."/>
            <person name="Kuske C.R."/>
            <person name="Larimer F."/>
            <person name="Land M."/>
            <person name="Hauser L."/>
            <person name="Kyrpides N."/>
            <person name="Ovchinnikova G."/>
            <person name="Brettar I."/>
            <person name="Rodrigues J."/>
            <person name="Konstantinidis K."/>
            <person name="Tiedje J."/>
        </authorList>
    </citation>
    <scope>NUCLEOTIDE SEQUENCE [LARGE SCALE GENOMIC DNA]</scope>
    <source>
        <strain>OS223</strain>
    </source>
</reference>
<sequence length="124" mass="14492">MEYEFRRNSLTGTFLASFSMDHEVLGQWFTEELGPELAKIQQVLDMIKEIQTDKRGAWRLVGNDFTLELEREQARVFANTLGFEQEYELEEAMSLYDAESEAYCGLEDFEQALLSWQTFIEKGL</sequence>
<proteinExistence type="inferred from homology"/>
<accession>B8EB82</accession>
<organism>
    <name type="scientific">Shewanella baltica (strain OS223)</name>
    <dbReference type="NCBI Taxonomy" id="407976"/>
    <lineage>
        <taxon>Bacteria</taxon>
        <taxon>Pseudomonadati</taxon>
        <taxon>Pseudomonadota</taxon>
        <taxon>Gammaproteobacteria</taxon>
        <taxon>Alteromonadales</taxon>
        <taxon>Shewanellaceae</taxon>
        <taxon>Shewanella</taxon>
    </lineage>
</organism>
<gene>
    <name type="ordered locus">Sbal223_3655</name>
</gene>